<protein>
    <recommendedName>
        <fullName>Uncharacterized protein C15orf62 homolog, mitochondrial</fullName>
    </recommendedName>
</protein>
<feature type="transit peptide" description="Mitochondrion" evidence="1">
    <location>
        <begin position="1"/>
        <end position="11"/>
    </location>
</feature>
<feature type="chain" id="PRO_0000332137" description="Uncharacterized protein C15orf62 homolog, mitochondrial">
    <location>
        <begin position="12"/>
        <end position="175"/>
    </location>
</feature>
<feature type="region of interest" description="Disordered" evidence="2">
    <location>
        <begin position="29"/>
        <end position="48"/>
    </location>
</feature>
<reference key="1">
    <citation type="journal article" date="2005" name="Science">
        <title>The transcriptional landscape of the mammalian genome.</title>
        <authorList>
            <person name="Carninci P."/>
            <person name="Kasukawa T."/>
            <person name="Katayama S."/>
            <person name="Gough J."/>
            <person name="Frith M.C."/>
            <person name="Maeda N."/>
            <person name="Oyama R."/>
            <person name="Ravasi T."/>
            <person name="Lenhard B."/>
            <person name="Wells C."/>
            <person name="Kodzius R."/>
            <person name="Shimokawa K."/>
            <person name="Bajic V.B."/>
            <person name="Brenner S.E."/>
            <person name="Batalov S."/>
            <person name="Forrest A.R."/>
            <person name="Zavolan M."/>
            <person name="Davis M.J."/>
            <person name="Wilming L.G."/>
            <person name="Aidinis V."/>
            <person name="Allen J.E."/>
            <person name="Ambesi-Impiombato A."/>
            <person name="Apweiler R."/>
            <person name="Aturaliya R.N."/>
            <person name="Bailey T.L."/>
            <person name="Bansal M."/>
            <person name="Baxter L."/>
            <person name="Beisel K.W."/>
            <person name="Bersano T."/>
            <person name="Bono H."/>
            <person name="Chalk A.M."/>
            <person name="Chiu K.P."/>
            <person name="Choudhary V."/>
            <person name="Christoffels A."/>
            <person name="Clutterbuck D.R."/>
            <person name="Crowe M.L."/>
            <person name="Dalla E."/>
            <person name="Dalrymple B.P."/>
            <person name="de Bono B."/>
            <person name="Della Gatta G."/>
            <person name="di Bernardo D."/>
            <person name="Down T."/>
            <person name="Engstrom P."/>
            <person name="Fagiolini M."/>
            <person name="Faulkner G."/>
            <person name="Fletcher C.F."/>
            <person name="Fukushima T."/>
            <person name="Furuno M."/>
            <person name="Futaki S."/>
            <person name="Gariboldi M."/>
            <person name="Georgii-Hemming P."/>
            <person name="Gingeras T.R."/>
            <person name="Gojobori T."/>
            <person name="Green R.E."/>
            <person name="Gustincich S."/>
            <person name="Harbers M."/>
            <person name="Hayashi Y."/>
            <person name="Hensch T.K."/>
            <person name="Hirokawa N."/>
            <person name="Hill D."/>
            <person name="Huminiecki L."/>
            <person name="Iacono M."/>
            <person name="Ikeo K."/>
            <person name="Iwama A."/>
            <person name="Ishikawa T."/>
            <person name="Jakt M."/>
            <person name="Kanapin A."/>
            <person name="Katoh M."/>
            <person name="Kawasawa Y."/>
            <person name="Kelso J."/>
            <person name="Kitamura H."/>
            <person name="Kitano H."/>
            <person name="Kollias G."/>
            <person name="Krishnan S.P."/>
            <person name="Kruger A."/>
            <person name="Kummerfeld S.K."/>
            <person name="Kurochkin I.V."/>
            <person name="Lareau L.F."/>
            <person name="Lazarevic D."/>
            <person name="Lipovich L."/>
            <person name="Liu J."/>
            <person name="Liuni S."/>
            <person name="McWilliam S."/>
            <person name="Madan Babu M."/>
            <person name="Madera M."/>
            <person name="Marchionni L."/>
            <person name="Matsuda H."/>
            <person name="Matsuzawa S."/>
            <person name="Miki H."/>
            <person name="Mignone F."/>
            <person name="Miyake S."/>
            <person name="Morris K."/>
            <person name="Mottagui-Tabar S."/>
            <person name="Mulder N."/>
            <person name="Nakano N."/>
            <person name="Nakauchi H."/>
            <person name="Ng P."/>
            <person name="Nilsson R."/>
            <person name="Nishiguchi S."/>
            <person name="Nishikawa S."/>
            <person name="Nori F."/>
            <person name="Ohara O."/>
            <person name="Okazaki Y."/>
            <person name="Orlando V."/>
            <person name="Pang K.C."/>
            <person name="Pavan W.J."/>
            <person name="Pavesi G."/>
            <person name="Pesole G."/>
            <person name="Petrovsky N."/>
            <person name="Piazza S."/>
            <person name="Reed J."/>
            <person name="Reid J.F."/>
            <person name="Ring B.Z."/>
            <person name="Ringwald M."/>
            <person name="Rost B."/>
            <person name="Ruan Y."/>
            <person name="Salzberg S.L."/>
            <person name="Sandelin A."/>
            <person name="Schneider C."/>
            <person name="Schoenbach C."/>
            <person name="Sekiguchi K."/>
            <person name="Semple C.A."/>
            <person name="Seno S."/>
            <person name="Sessa L."/>
            <person name="Sheng Y."/>
            <person name="Shibata Y."/>
            <person name="Shimada H."/>
            <person name="Shimada K."/>
            <person name="Silva D."/>
            <person name="Sinclair B."/>
            <person name="Sperling S."/>
            <person name="Stupka E."/>
            <person name="Sugiura K."/>
            <person name="Sultana R."/>
            <person name="Takenaka Y."/>
            <person name="Taki K."/>
            <person name="Tammoja K."/>
            <person name="Tan S.L."/>
            <person name="Tang S."/>
            <person name="Taylor M.S."/>
            <person name="Tegner J."/>
            <person name="Teichmann S.A."/>
            <person name="Ueda H.R."/>
            <person name="van Nimwegen E."/>
            <person name="Verardo R."/>
            <person name="Wei C.L."/>
            <person name="Yagi K."/>
            <person name="Yamanishi H."/>
            <person name="Zabarovsky E."/>
            <person name="Zhu S."/>
            <person name="Zimmer A."/>
            <person name="Hide W."/>
            <person name="Bult C."/>
            <person name="Grimmond S.M."/>
            <person name="Teasdale R.D."/>
            <person name="Liu E.T."/>
            <person name="Brusic V."/>
            <person name="Quackenbush J."/>
            <person name="Wahlestedt C."/>
            <person name="Mattick J.S."/>
            <person name="Hume D.A."/>
            <person name="Kai C."/>
            <person name="Sasaki D."/>
            <person name="Tomaru Y."/>
            <person name="Fukuda S."/>
            <person name="Kanamori-Katayama M."/>
            <person name="Suzuki M."/>
            <person name="Aoki J."/>
            <person name="Arakawa T."/>
            <person name="Iida J."/>
            <person name="Imamura K."/>
            <person name="Itoh M."/>
            <person name="Kato T."/>
            <person name="Kawaji H."/>
            <person name="Kawagashira N."/>
            <person name="Kawashima T."/>
            <person name="Kojima M."/>
            <person name="Kondo S."/>
            <person name="Konno H."/>
            <person name="Nakano K."/>
            <person name="Ninomiya N."/>
            <person name="Nishio T."/>
            <person name="Okada M."/>
            <person name="Plessy C."/>
            <person name="Shibata K."/>
            <person name="Shiraki T."/>
            <person name="Suzuki S."/>
            <person name="Tagami M."/>
            <person name="Waki K."/>
            <person name="Watahiki A."/>
            <person name="Okamura-Oho Y."/>
            <person name="Suzuki H."/>
            <person name="Kawai J."/>
            <person name="Hayashizaki Y."/>
        </authorList>
    </citation>
    <scope>NUCLEOTIDE SEQUENCE [LARGE SCALE MRNA]</scope>
    <source>
        <strain>C57BL/6J</strain>
        <tissue>Skin</tissue>
    </source>
</reference>
<reference key="2">
    <citation type="journal article" date="2009" name="PLoS Biol.">
        <title>Lineage-specific biology revealed by a finished genome assembly of the mouse.</title>
        <authorList>
            <person name="Church D.M."/>
            <person name="Goodstadt L."/>
            <person name="Hillier L.W."/>
            <person name="Zody M.C."/>
            <person name="Goldstein S."/>
            <person name="She X."/>
            <person name="Bult C.J."/>
            <person name="Agarwala R."/>
            <person name="Cherry J.L."/>
            <person name="DiCuccio M."/>
            <person name="Hlavina W."/>
            <person name="Kapustin Y."/>
            <person name="Meric P."/>
            <person name="Maglott D."/>
            <person name="Birtle Z."/>
            <person name="Marques A.C."/>
            <person name="Graves T."/>
            <person name="Zhou S."/>
            <person name="Teague B."/>
            <person name="Potamousis K."/>
            <person name="Churas C."/>
            <person name="Place M."/>
            <person name="Herschleb J."/>
            <person name="Runnheim R."/>
            <person name="Forrest D."/>
            <person name="Amos-Landgraf J."/>
            <person name="Schwartz D.C."/>
            <person name="Cheng Z."/>
            <person name="Lindblad-Toh K."/>
            <person name="Eichler E.E."/>
            <person name="Ponting C.P."/>
        </authorList>
    </citation>
    <scope>NUCLEOTIDE SEQUENCE [LARGE SCALE GENOMIC DNA]</scope>
    <source>
        <strain>C57BL/6J</strain>
    </source>
</reference>
<organism>
    <name type="scientific">Mus musculus</name>
    <name type="common">Mouse</name>
    <dbReference type="NCBI Taxonomy" id="10090"/>
    <lineage>
        <taxon>Eukaryota</taxon>
        <taxon>Metazoa</taxon>
        <taxon>Chordata</taxon>
        <taxon>Craniata</taxon>
        <taxon>Vertebrata</taxon>
        <taxon>Euteleostomi</taxon>
        <taxon>Mammalia</taxon>
        <taxon>Eutheria</taxon>
        <taxon>Euarchontoglires</taxon>
        <taxon>Glires</taxon>
        <taxon>Rodentia</taxon>
        <taxon>Myomorpha</taxon>
        <taxon>Muroidea</taxon>
        <taxon>Muridae</taxon>
        <taxon>Murinae</taxon>
        <taxon>Mus</taxon>
        <taxon>Mus</taxon>
    </lineage>
</organism>
<gene>
    <name type="primary">Gm14137</name>
</gene>
<dbReference type="EMBL" id="AK028753">
    <property type="protein sequence ID" value="BAC26099.1"/>
    <property type="status" value="ALT_INIT"/>
    <property type="molecule type" value="mRNA"/>
</dbReference>
<dbReference type="EMBL" id="AL772264">
    <property type="protein sequence ID" value="CAM45944.1"/>
    <property type="status" value="ALT_INIT"/>
    <property type="molecule type" value="Genomic_DNA"/>
</dbReference>
<dbReference type="CCDS" id="CCDS16594.2"/>
<dbReference type="RefSeq" id="NP_001034312.2">
    <property type="nucleotide sequence ID" value="NM_001039223.4"/>
</dbReference>
<dbReference type="FunCoup" id="Q8CE97">
    <property type="interactions" value="63"/>
</dbReference>
<dbReference type="iPTMnet" id="Q8CE97"/>
<dbReference type="PhosphoSitePlus" id="Q8CE97"/>
<dbReference type="PaxDb" id="10090-ENSMUSP00000068999"/>
<dbReference type="ProteomicsDB" id="279127"/>
<dbReference type="Antibodypedia" id="49844">
    <property type="antibodies" value="9 antibodies from 7 providers"/>
</dbReference>
<dbReference type="Ensembl" id="ENSMUST00000239130.2">
    <property type="protein sequence ID" value="ENSMUSP00000159192.2"/>
    <property type="gene ID" value="ENSMUSG00000055926.4"/>
</dbReference>
<dbReference type="GeneID" id="623781"/>
<dbReference type="KEGG" id="mmu:623781"/>
<dbReference type="AGR" id="MGI:3651144"/>
<dbReference type="MGI" id="MGI:3651144">
    <property type="gene designation" value="Gm14137"/>
</dbReference>
<dbReference type="VEuPathDB" id="HostDB:ENSMUSG00000055926"/>
<dbReference type="eggNOG" id="ENOG502S89I">
    <property type="taxonomic scope" value="Eukaryota"/>
</dbReference>
<dbReference type="GeneTree" id="ENSGT00390000007057"/>
<dbReference type="InParanoid" id="Q8CE97"/>
<dbReference type="OrthoDB" id="9447768at2759"/>
<dbReference type="BioGRID-ORCS" id="623781">
    <property type="hits" value="0 hits in 69 CRISPR screens"/>
</dbReference>
<dbReference type="PRO" id="PR:Q8CE97"/>
<dbReference type="Proteomes" id="UP000000589">
    <property type="component" value="Chromosome 2"/>
</dbReference>
<dbReference type="RNAct" id="Q8CE97">
    <property type="molecule type" value="protein"/>
</dbReference>
<dbReference type="Bgee" id="ENSMUSG00000055926">
    <property type="expression patterns" value="Expressed in lip and 81 other cell types or tissues"/>
</dbReference>
<dbReference type="ExpressionAtlas" id="Q8CE97">
    <property type="expression patterns" value="baseline and differential"/>
</dbReference>
<dbReference type="GO" id="GO:0005739">
    <property type="term" value="C:mitochondrion"/>
    <property type="evidence" value="ECO:0007669"/>
    <property type="project" value="UniProtKB-SubCell"/>
</dbReference>
<dbReference type="InterPro" id="IPR029273">
    <property type="entry name" value="Cdc42_effect-like"/>
</dbReference>
<dbReference type="InterPro" id="IPR051296">
    <property type="entry name" value="Cdc42_Effector_BORG/CEP"/>
</dbReference>
<dbReference type="PANTHER" id="PTHR15344">
    <property type="entry name" value="CDC42 EFFECTOR PROTEIN BORG"/>
    <property type="match status" value="1"/>
</dbReference>
<dbReference type="PANTHER" id="PTHR15344:SF8">
    <property type="entry name" value="GENE 14137-RELATED"/>
    <property type="match status" value="1"/>
</dbReference>
<dbReference type="Pfam" id="PF14957">
    <property type="entry name" value="BORG_CEP"/>
    <property type="match status" value="1"/>
</dbReference>
<sequence>METWRKGSFRNASFFKRITLGRPRRLHRQGSILSQASTAGGDHEEYSNREVIRELQGRPDGRRLPLWGDEHPRATLLAPPKPPRLYRESSSCPNILEPPASYTAGYSATLPSAISLTGPLHQCSEEALSDTPHFPRTPTPDLSDPFLSFKVDLGLSLLEEVLQILKEQFPSEPHF</sequence>
<name>CO062_MOUSE</name>
<keyword id="KW-0496">Mitochondrion</keyword>
<keyword id="KW-1185">Reference proteome</keyword>
<keyword id="KW-0809">Transit peptide</keyword>
<accession>Q8CE97</accession>
<proteinExistence type="evidence at transcript level"/>
<evidence type="ECO:0000255" key="1"/>
<evidence type="ECO:0000256" key="2">
    <source>
        <dbReference type="SAM" id="MobiDB-lite"/>
    </source>
</evidence>
<evidence type="ECO:0000305" key="3"/>
<comment type="subcellular location">
    <subcellularLocation>
        <location evidence="3">Mitochondrion</location>
    </subcellularLocation>
</comment>
<comment type="sequence caution" evidence="3">
    <conflict type="erroneous initiation">
        <sequence resource="EMBL-CDS" id="BAC26099"/>
    </conflict>
</comment>
<comment type="sequence caution" evidence="3">
    <conflict type="erroneous initiation">
        <sequence resource="EMBL-CDS" id="CAM45944"/>
    </conflict>
</comment>